<dbReference type="EMBL" id="CH954177">
    <property type="protein sequence ID" value="EDV58108.1"/>
    <property type="molecule type" value="Genomic_DNA"/>
</dbReference>
<dbReference type="SMR" id="B3N6D9"/>
<dbReference type="EnsemblMetazoa" id="FBtr0145262">
    <property type="protein sequence ID" value="FBpp0143754"/>
    <property type="gene ID" value="FBgn0117332"/>
</dbReference>
<dbReference type="EnsemblMetazoa" id="XM_001969013.3">
    <property type="protein sequence ID" value="XP_001969049.1"/>
    <property type="gene ID" value="LOC6541518"/>
</dbReference>
<dbReference type="GeneID" id="6541518"/>
<dbReference type="KEGG" id="der:6541518"/>
<dbReference type="eggNOG" id="KOG3326">
    <property type="taxonomic scope" value="Eukaryota"/>
</dbReference>
<dbReference type="HOGENOM" id="CLU_103054_0_3_1"/>
<dbReference type="OMA" id="DTEIMRM"/>
<dbReference type="OrthoDB" id="284292at2759"/>
<dbReference type="PhylomeDB" id="B3N6D9"/>
<dbReference type="Proteomes" id="UP000008711">
    <property type="component" value="Unassembled WGS sequence"/>
</dbReference>
<dbReference type="GO" id="GO:0005759">
    <property type="term" value="C:mitochondrial matrix"/>
    <property type="evidence" value="ECO:0007669"/>
    <property type="project" value="UniProtKB-SubCell"/>
</dbReference>
<dbReference type="GO" id="GO:0005739">
    <property type="term" value="C:mitochondrion"/>
    <property type="evidence" value="ECO:0000250"/>
    <property type="project" value="UniProtKB"/>
</dbReference>
<dbReference type="GO" id="GO:0006121">
    <property type="term" value="P:mitochondrial electron transport, succinate to ubiquinone"/>
    <property type="evidence" value="ECO:0000250"/>
    <property type="project" value="UniProtKB"/>
</dbReference>
<dbReference type="GO" id="GO:0034553">
    <property type="term" value="P:mitochondrial respiratory chain complex II assembly"/>
    <property type="evidence" value="ECO:0007669"/>
    <property type="project" value="TreeGrafter"/>
</dbReference>
<dbReference type="GO" id="GO:0018293">
    <property type="term" value="P:protein-FAD linkage"/>
    <property type="evidence" value="ECO:0000250"/>
    <property type="project" value="UniProtKB"/>
</dbReference>
<dbReference type="GO" id="GO:0006099">
    <property type="term" value="P:tricarboxylic acid cycle"/>
    <property type="evidence" value="ECO:0007669"/>
    <property type="project" value="TreeGrafter"/>
</dbReference>
<dbReference type="FunFam" id="1.10.150.250:FF:000002">
    <property type="entry name" value="Succinate dehydrogenase assembly factor 2, mitochondrial"/>
    <property type="match status" value="1"/>
</dbReference>
<dbReference type="Gene3D" id="1.10.150.250">
    <property type="entry name" value="Flavinator of succinate dehydrogenase"/>
    <property type="match status" value="1"/>
</dbReference>
<dbReference type="HAMAP" id="MF_03057">
    <property type="entry name" value="SDHAF2"/>
    <property type="match status" value="1"/>
</dbReference>
<dbReference type="InterPro" id="IPR005631">
    <property type="entry name" value="SDH"/>
</dbReference>
<dbReference type="InterPro" id="IPR036714">
    <property type="entry name" value="SDH_sf"/>
</dbReference>
<dbReference type="InterPro" id="IPR028882">
    <property type="entry name" value="SDHAF2"/>
</dbReference>
<dbReference type="PANTHER" id="PTHR12469">
    <property type="entry name" value="PROTEIN EMI5 HOMOLOG, MITOCHONDRIAL"/>
    <property type="match status" value="1"/>
</dbReference>
<dbReference type="PANTHER" id="PTHR12469:SF2">
    <property type="entry name" value="SUCCINATE DEHYDROGENASE ASSEMBLY FACTOR 2, MITOCHONDRIAL"/>
    <property type="match status" value="1"/>
</dbReference>
<dbReference type="Pfam" id="PF03937">
    <property type="entry name" value="Sdh5"/>
    <property type="match status" value="1"/>
</dbReference>
<dbReference type="SUPFAM" id="SSF109910">
    <property type="entry name" value="YgfY-like"/>
    <property type="match status" value="1"/>
</dbReference>
<evidence type="ECO:0000255" key="1">
    <source>
        <dbReference type="HAMAP-Rule" id="MF_03057"/>
    </source>
</evidence>
<reference key="1">
    <citation type="journal article" date="2007" name="Nature">
        <title>Evolution of genes and genomes on the Drosophila phylogeny.</title>
        <authorList>
            <consortium name="Drosophila 12 genomes consortium"/>
        </authorList>
    </citation>
    <scope>NUCLEOTIDE SEQUENCE [LARGE SCALE GENOMIC DNA]</scope>
    <source>
        <strain>Tucson 14021-0224.01</strain>
    </source>
</reference>
<protein>
    <recommendedName>
        <fullName evidence="1">Succinate dehydrogenase assembly factor 2-B, mitochondrial</fullName>
        <shortName evidence="1">SDH assembly factor 2-B</shortName>
        <shortName evidence="1">SDHAF2-B</shortName>
    </recommendedName>
</protein>
<name>SDF2B_DROER</name>
<keyword id="KW-0143">Chaperone</keyword>
<keyword id="KW-0496">Mitochondrion</keyword>
<keyword id="KW-0809">Transit peptide</keyword>
<gene>
    <name type="ORF">GG25208</name>
</gene>
<proteinExistence type="inferred from homology"/>
<accession>B3N6D9</accession>
<comment type="function">
    <text evidence="1">Plays an essential role in the assembly of succinate dehydrogenase (SDH), an enzyme complex (also referred to as respiratory complex II) that is a component of both the tricarboxylic acid (TCA) cycle and the mitochondrial electron transport chain, and which couples the oxidation of succinate to fumarate with the reduction of ubiquinone (coenzyme Q) to ubiquinol. Required for flavinylation (covalent attachment of FAD) of the flavoprotein subunit of the SDH catalytic dimer.</text>
</comment>
<comment type="subunit">
    <text evidence="1">Interacts with the flavoprotein subunit within the SDH catalytic dimer.</text>
</comment>
<comment type="subcellular location">
    <subcellularLocation>
        <location evidence="1">Mitochondrion matrix</location>
    </subcellularLocation>
</comment>
<comment type="similarity">
    <text evidence="1">Belongs to the SDHAF2 family.</text>
</comment>
<feature type="transit peptide" description="Mitochondrion" evidence="1">
    <location>
        <begin position="1"/>
        <end position="24"/>
    </location>
</feature>
<feature type="chain" id="PRO_0000383165" description="Succinate dehydrogenase assembly factor 2-B, mitochondrial">
    <location>
        <begin position="25"/>
        <end position="156"/>
    </location>
</feature>
<sequence>MLRQLIVSTVGRRMPLQMISQSRLASNLDKTEYTTPGEIVDYDDPPHLPVPEYPVRPDEPLQTRKQRLLYQSRKRGMLENDLLLSTFVAKHLKDFNAEQTAEYDQLINGVSNDWDIFYWATDTKPTPPQFDTEIMRLLKEHVKNHEKVQRIRQPDL</sequence>
<organism>
    <name type="scientific">Drosophila erecta</name>
    <name type="common">Fruit fly</name>
    <dbReference type="NCBI Taxonomy" id="7220"/>
    <lineage>
        <taxon>Eukaryota</taxon>
        <taxon>Metazoa</taxon>
        <taxon>Ecdysozoa</taxon>
        <taxon>Arthropoda</taxon>
        <taxon>Hexapoda</taxon>
        <taxon>Insecta</taxon>
        <taxon>Pterygota</taxon>
        <taxon>Neoptera</taxon>
        <taxon>Endopterygota</taxon>
        <taxon>Diptera</taxon>
        <taxon>Brachycera</taxon>
        <taxon>Muscomorpha</taxon>
        <taxon>Ephydroidea</taxon>
        <taxon>Drosophilidae</taxon>
        <taxon>Drosophila</taxon>
        <taxon>Sophophora</taxon>
    </lineage>
</organism>